<proteinExistence type="inferred from homology"/>
<gene>
    <name type="primary">MT-CYB</name>
    <name type="synonym">COB</name>
    <name type="synonym">CYTB</name>
    <name type="synonym">MTCYB</name>
</gene>
<geneLocation type="mitochondrion"/>
<reference key="1">
    <citation type="submission" date="2003-09" db="EMBL/GenBank/DDBJ databases">
        <title>Molecular evidence for unrecognized biodiversity in the bat genus Micronycteris (Phyllostomidae), with descriptions of two new subgenera.</title>
        <authorList>
            <person name="Porter C.A."/>
            <person name="Hoofer S.R."/>
            <person name="Cline C.A."/>
            <person name="Hoffmann F.G."/>
            <person name="Baker R.J."/>
        </authorList>
    </citation>
    <scope>NUCLEOTIDE SEQUENCE [GENOMIC DNA]</scope>
</reference>
<feature type="chain" id="PRO_0000254871" description="Cytochrome b">
    <location>
        <begin position="1"/>
        <end position="379"/>
    </location>
</feature>
<feature type="transmembrane region" description="Helical" evidence="2">
    <location>
        <begin position="33"/>
        <end position="53"/>
    </location>
</feature>
<feature type="transmembrane region" description="Helical" evidence="2">
    <location>
        <begin position="77"/>
        <end position="98"/>
    </location>
</feature>
<feature type="transmembrane region" description="Helical" evidence="2">
    <location>
        <begin position="113"/>
        <end position="133"/>
    </location>
</feature>
<feature type="transmembrane region" description="Helical" evidence="2">
    <location>
        <begin position="178"/>
        <end position="198"/>
    </location>
</feature>
<feature type="transmembrane region" description="Helical" evidence="2">
    <location>
        <begin position="226"/>
        <end position="246"/>
    </location>
</feature>
<feature type="transmembrane region" description="Helical" evidence="2">
    <location>
        <begin position="288"/>
        <end position="308"/>
    </location>
</feature>
<feature type="transmembrane region" description="Helical" evidence="2">
    <location>
        <begin position="320"/>
        <end position="340"/>
    </location>
</feature>
<feature type="transmembrane region" description="Helical" evidence="2">
    <location>
        <begin position="347"/>
        <end position="367"/>
    </location>
</feature>
<feature type="binding site" description="axial binding residue" evidence="2">
    <location>
        <position position="83"/>
    </location>
    <ligand>
        <name>heme b</name>
        <dbReference type="ChEBI" id="CHEBI:60344"/>
        <label>b562</label>
    </ligand>
    <ligandPart>
        <name>Fe</name>
        <dbReference type="ChEBI" id="CHEBI:18248"/>
    </ligandPart>
</feature>
<feature type="binding site" description="axial binding residue" evidence="2">
    <location>
        <position position="97"/>
    </location>
    <ligand>
        <name>heme b</name>
        <dbReference type="ChEBI" id="CHEBI:60344"/>
        <label>b566</label>
    </ligand>
    <ligandPart>
        <name>Fe</name>
        <dbReference type="ChEBI" id="CHEBI:18248"/>
    </ligandPart>
</feature>
<feature type="binding site" description="axial binding residue" evidence="2">
    <location>
        <position position="182"/>
    </location>
    <ligand>
        <name>heme b</name>
        <dbReference type="ChEBI" id="CHEBI:60344"/>
        <label>b562</label>
    </ligand>
    <ligandPart>
        <name>Fe</name>
        <dbReference type="ChEBI" id="CHEBI:18248"/>
    </ligandPart>
</feature>
<feature type="binding site" description="axial binding residue" evidence="2">
    <location>
        <position position="196"/>
    </location>
    <ligand>
        <name>heme b</name>
        <dbReference type="ChEBI" id="CHEBI:60344"/>
        <label>b566</label>
    </ligand>
    <ligandPart>
        <name>Fe</name>
        <dbReference type="ChEBI" id="CHEBI:18248"/>
    </ligandPart>
</feature>
<feature type="binding site" evidence="2">
    <location>
        <position position="201"/>
    </location>
    <ligand>
        <name>a ubiquinone</name>
        <dbReference type="ChEBI" id="CHEBI:16389"/>
    </ligand>
</feature>
<name>CYB_TRINC</name>
<protein>
    <recommendedName>
        <fullName>Cytochrome b</fullName>
    </recommendedName>
    <alternativeName>
        <fullName>Complex III subunit 3</fullName>
    </alternativeName>
    <alternativeName>
        <fullName>Complex III subunit III</fullName>
    </alternativeName>
    <alternativeName>
        <fullName>Cytochrome b-c1 complex subunit 3</fullName>
    </alternativeName>
    <alternativeName>
        <fullName>Ubiquinol-cytochrome-c reductase complex cytochrome b subunit</fullName>
    </alternativeName>
</protein>
<comment type="function">
    <text evidence="2">Component of the ubiquinol-cytochrome c reductase complex (complex III or cytochrome b-c1 complex) that is part of the mitochondrial respiratory chain. The b-c1 complex mediates electron transfer from ubiquinol to cytochrome c. Contributes to the generation of a proton gradient across the mitochondrial membrane that is then used for ATP synthesis.</text>
</comment>
<comment type="cofactor">
    <cofactor evidence="2">
        <name>heme b</name>
        <dbReference type="ChEBI" id="CHEBI:60344"/>
    </cofactor>
    <text evidence="2">Binds 2 heme b groups non-covalently.</text>
</comment>
<comment type="subunit">
    <text evidence="2">The cytochrome bc1 complex contains 11 subunits: 3 respiratory subunits (MT-CYB, CYC1 and UQCRFS1), 2 core proteins (UQCRC1 and UQCRC2) and 6 low-molecular weight proteins (UQCRH/QCR6, UQCRB/QCR7, UQCRQ/QCR8, UQCR10/QCR9, UQCR11/QCR10 and a cleavage product of UQCRFS1). This cytochrome bc1 complex then forms a dimer.</text>
</comment>
<comment type="subcellular location">
    <subcellularLocation>
        <location evidence="2">Mitochondrion inner membrane</location>
        <topology evidence="2">Multi-pass membrane protein</topology>
    </subcellularLocation>
</comment>
<comment type="miscellaneous">
    <text evidence="1">Heme 1 (or BL or b562) is low-potential and absorbs at about 562 nm, and heme 2 (or BH or b566) is high-potential and absorbs at about 566 nm.</text>
</comment>
<comment type="similarity">
    <text evidence="3 4">Belongs to the cytochrome b family.</text>
</comment>
<comment type="caution">
    <text evidence="2">The full-length protein contains only eight transmembrane helices, not nine as predicted by bioinformatics tools.</text>
</comment>
<keyword id="KW-0249">Electron transport</keyword>
<keyword id="KW-0349">Heme</keyword>
<keyword id="KW-0408">Iron</keyword>
<keyword id="KW-0472">Membrane</keyword>
<keyword id="KW-0479">Metal-binding</keyword>
<keyword id="KW-0496">Mitochondrion</keyword>
<keyword id="KW-0999">Mitochondrion inner membrane</keyword>
<keyword id="KW-0679">Respiratory chain</keyword>
<keyword id="KW-0812">Transmembrane</keyword>
<keyword id="KW-1133">Transmembrane helix</keyword>
<keyword id="KW-0813">Transport</keyword>
<keyword id="KW-0830">Ubiquinone</keyword>
<sequence length="379" mass="42716">MTNIRKTHPLLKIINSSFVDLPAPSSLSSWWNFGSLLGVCLAVQILTGLFLAMHYTSDTATAFNSVTHICRDVNYGWLLRYLHANGASMFFICLYLHVGRGLYYGSYTYSETWNVGILLLFTVMATAFMGYVLPWGQMSFWGATVITNLLSAIPYIGTELVQWIWGGFSVDKATLTRFFAFHFLFPFLVAALVMVHLLFLHETGSNNPTGIPSDPDMIPFHPYYTIKDILGFLIMLTVLSALVLFSPDLLGDPDNYTPANPLNTPPHIKPEWYFLFAYAILRSIPNKLGGVLALVLSILVLAIVPALHLSKQRSMMFRPLSQCLFWFLVAILFTLTWIGGQPVEYPYIIIGQMASALYFLTLLVFMPLTSLVENYLLKW</sequence>
<organism>
    <name type="scientific">Trinycteris nicefori</name>
    <name type="common">Niceforo's big-eared bat</name>
    <name type="synonym">Micronycteris nicefori</name>
    <dbReference type="NCBI Taxonomy" id="148068"/>
    <lineage>
        <taxon>Eukaryota</taxon>
        <taxon>Metazoa</taxon>
        <taxon>Chordata</taxon>
        <taxon>Craniata</taxon>
        <taxon>Vertebrata</taxon>
        <taxon>Euteleostomi</taxon>
        <taxon>Mammalia</taxon>
        <taxon>Eutheria</taxon>
        <taxon>Laurasiatheria</taxon>
        <taxon>Chiroptera</taxon>
        <taxon>Yangochiroptera</taxon>
        <taxon>Phyllostomidae</taxon>
        <taxon>Phyllostominae</taxon>
        <taxon>Micronycteris</taxon>
    </lineage>
</organism>
<accession>Q597E7</accession>
<evidence type="ECO:0000250" key="1"/>
<evidence type="ECO:0000250" key="2">
    <source>
        <dbReference type="UniProtKB" id="P00157"/>
    </source>
</evidence>
<evidence type="ECO:0000255" key="3">
    <source>
        <dbReference type="PROSITE-ProRule" id="PRU00967"/>
    </source>
</evidence>
<evidence type="ECO:0000255" key="4">
    <source>
        <dbReference type="PROSITE-ProRule" id="PRU00968"/>
    </source>
</evidence>
<dbReference type="EMBL" id="AY380749">
    <property type="protein sequence ID" value="AAR91762.1"/>
    <property type="molecule type" value="Genomic_DNA"/>
</dbReference>
<dbReference type="SMR" id="Q597E7"/>
<dbReference type="GO" id="GO:0005743">
    <property type="term" value="C:mitochondrial inner membrane"/>
    <property type="evidence" value="ECO:0007669"/>
    <property type="project" value="UniProtKB-SubCell"/>
</dbReference>
<dbReference type="GO" id="GO:0045275">
    <property type="term" value="C:respiratory chain complex III"/>
    <property type="evidence" value="ECO:0007669"/>
    <property type="project" value="InterPro"/>
</dbReference>
<dbReference type="GO" id="GO:0046872">
    <property type="term" value="F:metal ion binding"/>
    <property type="evidence" value="ECO:0007669"/>
    <property type="project" value="UniProtKB-KW"/>
</dbReference>
<dbReference type="GO" id="GO:0008121">
    <property type="term" value="F:ubiquinol-cytochrome-c reductase activity"/>
    <property type="evidence" value="ECO:0007669"/>
    <property type="project" value="InterPro"/>
</dbReference>
<dbReference type="GO" id="GO:0006122">
    <property type="term" value="P:mitochondrial electron transport, ubiquinol to cytochrome c"/>
    <property type="evidence" value="ECO:0007669"/>
    <property type="project" value="TreeGrafter"/>
</dbReference>
<dbReference type="CDD" id="cd00290">
    <property type="entry name" value="cytochrome_b_C"/>
    <property type="match status" value="1"/>
</dbReference>
<dbReference type="CDD" id="cd00284">
    <property type="entry name" value="Cytochrome_b_N"/>
    <property type="match status" value="1"/>
</dbReference>
<dbReference type="FunFam" id="1.20.810.10:FF:000002">
    <property type="entry name" value="Cytochrome b"/>
    <property type="match status" value="1"/>
</dbReference>
<dbReference type="Gene3D" id="1.20.810.10">
    <property type="entry name" value="Cytochrome Bc1 Complex, Chain C"/>
    <property type="match status" value="1"/>
</dbReference>
<dbReference type="InterPro" id="IPR005798">
    <property type="entry name" value="Cyt_b/b6_C"/>
</dbReference>
<dbReference type="InterPro" id="IPR036150">
    <property type="entry name" value="Cyt_b/b6_C_sf"/>
</dbReference>
<dbReference type="InterPro" id="IPR005797">
    <property type="entry name" value="Cyt_b/b6_N"/>
</dbReference>
<dbReference type="InterPro" id="IPR027387">
    <property type="entry name" value="Cytb/b6-like_sf"/>
</dbReference>
<dbReference type="InterPro" id="IPR030689">
    <property type="entry name" value="Cytochrome_b"/>
</dbReference>
<dbReference type="InterPro" id="IPR048260">
    <property type="entry name" value="Cytochrome_b_C_euk/bac"/>
</dbReference>
<dbReference type="InterPro" id="IPR048259">
    <property type="entry name" value="Cytochrome_b_N_euk/bac"/>
</dbReference>
<dbReference type="InterPro" id="IPR016174">
    <property type="entry name" value="Di-haem_cyt_TM"/>
</dbReference>
<dbReference type="PANTHER" id="PTHR19271">
    <property type="entry name" value="CYTOCHROME B"/>
    <property type="match status" value="1"/>
</dbReference>
<dbReference type="PANTHER" id="PTHR19271:SF16">
    <property type="entry name" value="CYTOCHROME B"/>
    <property type="match status" value="1"/>
</dbReference>
<dbReference type="Pfam" id="PF00032">
    <property type="entry name" value="Cytochrom_B_C"/>
    <property type="match status" value="1"/>
</dbReference>
<dbReference type="Pfam" id="PF00033">
    <property type="entry name" value="Cytochrome_B"/>
    <property type="match status" value="1"/>
</dbReference>
<dbReference type="PIRSF" id="PIRSF038885">
    <property type="entry name" value="COB"/>
    <property type="match status" value="1"/>
</dbReference>
<dbReference type="SUPFAM" id="SSF81648">
    <property type="entry name" value="a domain/subunit of cytochrome bc1 complex (Ubiquinol-cytochrome c reductase)"/>
    <property type="match status" value="1"/>
</dbReference>
<dbReference type="SUPFAM" id="SSF81342">
    <property type="entry name" value="Transmembrane di-heme cytochromes"/>
    <property type="match status" value="1"/>
</dbReference>
<dbReference type="PROSITE" id="PS51003">
    <property type="entry name" value="CYTB_CTER"/>
    <property type="match status" value="1"/>
</dbReference>
<dbReference type="PROSITE" id="PS51002">
    <property type="entry name" value="CYTB_NTER"/>
    <property type="match status" value="1"/>
</dbReference>